<gene>
    <name evidence="3" type="primary">hdrB2</name>
    <name evidence="5" type="ordered locus">MMP1053</name>
</gene>
<keyword id="KW-0484">Methanogenesis</keyword>
<keyword id="KW-0560">Oxidoreductase</keyword>
<keyword id="KW-1185">Reference proteome</keyword>
<name>HDRB2_METMP</name>
<dbReference type="EC" id="1.8.98.5" evidence="2"/>
<dbReference type="EC" id="1.8.98.6" evidence="1 2"/>
<dbReference type="EMBL" id="BX950229">
    <property type="protein sequence ID" value="CAF30609.1"/>
    <property type="molecule type" value="Genomic_DNA"/>
</dbReference>
<dbReference type="RefSeq" id="WP_011170997.1">
    <property type="nucleotide sequence ID" value="NC_005791.1"/>
</dbReference>
<dbReference type="SMR" id="Q6LYD8"/>
<dbReference type="STRING" id="267377.MMP1053"/>
<dbReference type="EnsemblBacteria" id="CAF30609">
    <property type="protein sequence ID" value="CAF30609"/>
    <property type="gene ID" value="MMP1053"/>
</dbReference>
<dbReference type="GeneID" id="2761166"/>
<dbReference type="KEGG" id="mmp:MMP1053"/>
<dbReference type="PATRIC" id="fig|267377.15.peg.1086"/>
<dbReference type="eggNOG" id="arCOG00338">
    <property type="taxonomic scope" value="Archaea"/>
</dbReference>
<dbReference type="HOGENOM" id="CLU_052147_1_0_2"/>
<dbReference type="OrthoDB" id="144689at2157"/>
<dbReference type="UniPathway" id="UPA00647">
    <property type="reaction ID" value="UER00700"/>
</dbReference>
<dbReference type="Proteomes" id="UP000000590">
    <property type="component" value="Chromosome"/>
</dbReference>
<dbReference type="GO" id="GO:0051912">
    <property type="term" value="F:CoB--CoM heterodisulfide reductase activity"/>
    <property type="evidence" value="ECO:0007669"/>
    <property type="project" value="InterPro"/>
</dbReference>
<dbReference type="GO" id="GO:0015948">
    <property type="term" value="P:methanogenesis"/>
    <property type="evidence" value="ECO:0007669"/>
    <property type="project" value="UniProtKB-KW"/>
</dbReference>
<dbReference type="Gene3D" id="1.20.1050.140">
    <property type="match status" value="1"/>
</dbReference>
<dbReference type="InterPro" id="IPR017678">
    <property type="entry name" value="CoB/CoM_hetero-S_Rdtase_bsu"/>
</dbReference>
<dbReference type="InterPro" id="IPR004017">
    <property type="entry name" value="Cys_rich_dom"/>
</dbReference>
<dbReference type="InterPro" id="IPR051278">
    <property type="entry name" value="HdrB/HdrD_reductase"/>
</dbReference>
<dbReference type="NCBIfam" id="TIGR03288">
    <property type="entry name" value="CoB_CoM_SS_B"/>
    <property type="match status" value="1"/>
</dbReference>
<dbReference type="PANTHER" id="PTHR42947">
    <property type="entry name" value="COB--COM HETERODISULFIDE REDUCTASE SUBUNIT B 1"/>
    <property type="match status" value="1"/>
</dbReference>
<dbReference type="PANTHER" id="PTHR42947:SF1">
    <property type="entry name" value="COB--COM HETERODISULFIDE REDUCTASE SUBUNIT B 1"/>
    <property type="match status" value="1"/>
</dbReference>
<dbReference type="Pfam" id="PF02754">
    <property type="entry name" value="CCG"/>
    <property type="match status" value="2"/>
</dbReference>
<reference key="1">
    <citation type="journal article" date="2004" name="J. Bacteriol.">
        <title>Complete genome sequence of the genetically tractable hydrogenotrophic methanogen Methanococcus maripaludis.</title>
        <authorList>
            <person name="Hendrickson E.L."/>
            <person name="Kaul R."/>
            <person name="Zhou Y."/>
            <person name="Bovee D."/>
            <person name="Chapman P."/>
            <person name="Chung J."/>
            <person name="Conway de Macario E."/>
            <person name="Dodsworth J.A."/>
            <person name="Gillett W."/>
            <person name="Graham D.E."/>
            <person name="Hackett M."/>
            <person name="Haydock A.K."/>
            <person name="Kang A."/>
            <person name="Land M.L."/>
            <person name="Levy R."/>
            <person name="Lie T.J."/>
            <person name="Major T.A."/>
            <person name="Moore B.C."/>
            <person name="Porat I."/>
            <person name="Palmeiri A."/>
            <person name="Rouse G."/>
            <person name="Saenphimmachak C."/>
            <person name="Soell D."/>
            <person name="Van Dien S."/>
            <person name="Wang T."/>
            <person name="Whitman W.B."/>
            <person name="Xia Q."/>
            <person name="Zhang Y."/>
            <person name="Larimer F.W."/>
            <person name="Olson M.V."/>
            <person name="Leigh J.A."/>
        </authorList>
    </citation>
    <scope>NUCLEOTIDE SEQUENCE [LARGE SCALE GENOMIC DNA]</scope>
    <source>
        <strain>DSM 14266 / JCM 13030 / NBRC 101832 / S2 / LL</strain>
    </source>
</reference>
<reference key="2">
    <citation type="journal article" date="2010" name="Proc. Natl. Acad. Sci. U.S.A.">
        <title>Protein complexing in a methanogen suggests electron bifurcation and electron delivery from formate to heterodisulfide reductase.</title>
        <authorList>
            <person name="Costa K.C."/>
            <person name="Wong P.M."/>
            <person name="Wang T."/>
            <person name="Lie T.J."/>
            <person name="Dodsworth J.A."/>
            <person name="Swanson I."/>
            <person name="Burn J.A."/>
            <person name="Hackett M."/>
            <person name="Leigh J.A."/>
        </authorList>
    </citation>
    <scope>FUNCTION</scope>
    <scope>CATALYTIC ACTIVITY</scope>
    <scope>SUBUNIT</scope>
    <source>
        <strain>DSM 14266 / JCM 13030 / NBRC 101832 / S2 / LL</strain>
    </source>
</reference>
<reference key="3">
    <citation type="journal article" date="2013" name="J. Bacteriol.">
        <title>VhuD facilitates electron flow from H2 or formate to heterodisulfide reductase in Methanococcus maripaludis.</title>
        <authorList>
            <person name="Costa K.C."/>
            <person name="Lie T.J."/>
            <person name="Xia Q."/>
            <person name="Leigh J.A."/>
        </authorList>
    </citation>
    <scope>FUNCTION</scope>
    <scope>CATALYTIC ACTIVITY</scope>
    <scope>SUBUNIT</scope>
    <source>
        <strain>DSM 14266 / JCM 13030 / NBRC 101832 / S2 / LL</strain>
    </source>
</reference>
<protein>
    <recommendedName>
        <fullName evidence="4">H(2)/formate:CoB-CoM heterodisulfide,ferredoxin reductase subunit B2</fullName>
        <ecNumber evidence="2">1.8.98.5</ecNumber>
        <ecNumber evidence="1 2">1.8.98.6</ecNumber>
    </recommendedName>
    <alternativeName>
        <fullName evidence="4">CoB--CoM heterodisulfide reductase subunit B2</fullName>
    </alternativeName>
</protein>
<feature type="chain" id="PRO_0000443937" description="H(2)/formate:CoB-CoM heterodisulfide,ferredoxin reductase subunit B2">
    <location>
        <begin position="1"/>
        <end position="293"/>
    </location>
</feature>
<proteinExistence type="evidence at protein level"/>
<comment type="function">
    <text evidence="1 2">Part of a complex that catalyzes the reversible reduction of CoM-S-S-CoB to the thiol-coenzymes H-S-CoM (coenzyme M) and H-S-CoB (coenzyme B).</text>
</comment>
<comment type="catalytic activity">
    <reaction evidence="2">
        <text>coenzyme B + coenzyme M + 2 reduced [2Fe-2S]-[ferredoxin] + 2 H(+) = coenzyme M-coenzyme B heterodisulfide + 2 H2 + 2 oxidized [2Fe-2S]-[ferredoxin]</text>
        <dbReference type="Rhea" id="RHEA:55748"/>
        <dbReference type="Rhea" id="RHEA-COMP:10000"/>
        <dbReference type="Rhea" id="RHEA-COMP:10001"/>
        <dbReference type="ChEBI" id="CHEBI:15378"/>
        <dbReference type="ChEBI" id="CHEBI:18276"/>
        <dbReference type="ChEBI" id="CHEBI:33737"/>
        <dbReference type="ChEBI" id="CHEBI:33738"/>
        <dbReference type="ChEBI" id="CHEBI:58319"/>
        <dbReference type="ChEBI" id="CHEBI:58411"/>
        <dbReference type="ChEBI" id="CHEBI:58596"/>
        <dbReference type="EC" id="1.8.98.5"/>
    </reaction>
</comment>
<comment type="catalytic activity">
    <reaction evidence="1 2">
        <text>coenzyme B + coenzyme M + 2 reduced [2Fe-2S]-[ferredoxin] + 2 CO2 = coenzyme M-coenzyme B heterodisulfide + 2 formate + 2 oxidized [2Fe-2S]-[ferredoxin]</text>
        <dbReference type="Rhea" id="RHEA:55752"/>
        <dbReference type="Rhea" id="RHEA-COMP:10000"/>
        <dbReference type="Rhea" id="RHEA-COMP:10001"/>
        <dbReference type="ChEBI" id="CHEBI:15740"/>
        <dbReference type="ChEBI" id="CHEBI:16526"/>
        <dbReference type="ChEBI" id="CHEBI:33737"/>
        <dbReference type="ChEBI" id="CHEBI:33738"/>
        <dbReference type="ChEBI" id="CHEBI:58319"/>
        <dbReference type="ChEBI" id="CHEBI:58411"/>
        <dbReference type="ChEBI" id="CHEBI:58596"/>
        <dbReference type="EC" id="1.8.98.6"/>
    </reaction>
</comment>
<comment type="pathway">
    <text evidence="4">Cofactor metabolism; coenzyme M-coenzyme B heterodisulfide reduction; coenzyme B and coenzyme M from coenzyme M-coenzyme B heterodisulfide: step 1/1.</text>
</comment>
<comment type="subunit">
    <text evidence="1 2">The heterodisulfide reductase is composed of three subunits; HdrA, HdrB and HdrC. B1 and B2 subunits are interchangeable, as are the C1 and C2 subunits. The heterodisulfide reductase forms a supercomplex with formylmethanofuran dehydrogenase (Fwd), F(420)-non-reducing hydrogenase (Vhu) and formate dehydrogenase (Fdh).</text>
</comment>
<comment type="similarity">
    <text evidence="4">Belongs to the HdrB family.</text>
</comment>
<organism>
    <name type="scientific">Methanococcus maripaludis (strain DSM 14266 / JCM 13030 / NBRC 101832 / S2 / LL)</name>
    <dbReference type="NCBI Taxonomy" id="267377"/>
    <lineage>
        <taxon>Archaea</taxon>
        <taxon>Methanobacteriati</taxon>
        <taxon>Methanobacteriota</taxon>
        <taxon>Methanomada group</taxon>
        <taxon>Methanococci</taxon>
        <taxon>Methanococcales</taxon>
        <taxon>Methanococcaceae</taxon>
        <taxon>Methanococcus</taxon>
    </lineage>
</organism>
<accession>Q6LYD8</accession>
<evidence type="ECO:0000269" key="1">
    <source>
    </source>
</evidence>
<evidence type="ECO:0000269" key="2">
    <source>
    </source>
</evidence>
<evidence type="ECO:0000303" key="3">
    <source>
    </source>
</evidence>
<evidence type="ECO:0000305" key="4"/>
<evidence type="ECO:0000312" key="5">
    <source>
        <dbReference type="EMBL" id="CAF30609.1"/>
    </source>
</evidence>
<sequence length="293" mass="32026">MKYAFFLGCIMPNRYAGVESATRTVMEKLGVELVDMPGASCCPAPGVFGSFDQKTWLTLAARNLVIAEEMGTDIVTVCNGCYGSLYEAAHMLHENKEALAMVNEQLKEIGKEYKGTVHVRHFAELIYKEIGVDKIRENVVKPLAVNIGVHYGCHFLKPTAAKGLGNAEHPTMLDELVEATGAKSVDYKDKMMCCGAGGGVRAKELDLALSMTQEKIENMLAVGADATVNVCPFCQLQFDRGQVEIKEKLGNEYNFPVVHLSQLLGLAMGMDPKEVALDVNFISPEPLLQKLGY</sequence>